<feature type="chain" id="PRO_1000114192" description="DNA-directed RNA polymerase subunit Rpo11">
    <location>
        <begin position="1"/>
        <end position="98"/>
    </location>
</feature>
<comment type="function">
    <text evidence="1">DNA-dependent RNA polymerase (RNAP) catalyzes the transcription of DNA into RNA using the four ribonucleoside triphosphates as substrates.</text>
</comment>
<comment type="catalytic activity">
    <reaction evidence="1">
        <text>RNA(n) + a ribonucleoside 5'-triphosphate = RNA(n+1) + diphosphate</text>
        <dbReference type="Rhea" id="RHEA:21248"/>
        <dbReference type="Rhea" id="RHEA-COMP:14527"/>
        <dbReference type="Rhea" id="RHEA-COMP:17342"/>
        <dbReference type="ChEBI" id="CHEBI:33019"/>
        <dbReference type="ChEBI" id="CHEBI:61557"/>
        <dbReference type="ChEBI" id="CHEBI:140395"/>
        <dbReference type="EC" id="2.7.7.6"/>
    </reaction>
</comment>
<comment type="subunit">
    <text evidence="1">Part of the RNA polymerase complex.</text>
</comment>
<comment type="subcellular location">
    <subcellularLocation>
        <location evidence="1">Cytoplasm</location>
    </subcellularLocation>
</comment>
<comment type="similarity">
    <text evidence="1">Belongs to the archaeal Rpo11/eukaryotic RPB11/RPC19 RNA polymerase subunit family.</text>
</comment>
<reference key="1">
    <citation type="journal article" date="2008" name="Proc. Natl. Acad. Sci. U.S.A.">
        <title>A korarchaeal genome reveals new insights into the evolution of the Archaea.</title>
        <authorList>
            <person name="Elkins J.G."/>
            <person name="Podar M."/>
            <person name="Graham D.E."/>
            <person name="Makarova K.S."/>
            <person name="Wolf Y."/>
            <person name="Randau L."/>
            <person name="Hedlund B.P."/>
            <person name="Brochier-Armanet C."/>
            <person name="Kunin V."/>
            <person name="Anderson I."/>
            <person name="Lapidus A."/>
            <person name="Goltsman E."/>
            <person name="Barry K."/>
            <person name="Koonin E.V."/>
            <person name="Hugenholtz P."/>
            <person name="Kyrpides N."/>
            <person name="Wanner G."/>
            <person name="Richardson P."/>
            <person name="Keller M."/>
            <person name="Stetter K.O."/>
        </authorList>
    </citation>
    <scope>NUCLEOTIDE SEQUENCE [LARGE SCALE GENOMIC DNA]</scope>
    <source>
        <strain>OPF8</strain>
    </source>
</reference>
<keyword id="KW-0963">Cytoplasm</keyword>
<keyword id="KW-0240">DNA-directed RNA polymerase</keyword>
<keyword id="KW-0548">Nucleotidyltransferase</keyword>
<keyword id="KW-1185">Reference proteome</keyword>
<keyword id="KW-0804">Transcription</keyword>
<keyword id="KW-0808">Transferase</keyword>
<proteinExistence type="inferred from homology"/>
<name>RPO11_KORCO</name>
<dbReference type="EC" id="2.7.7.6" evidence="1"/>
<dbReference type="EMBL" id="CP000968">
    <property type="protein sequence ID" value="ACB06884.1"/>
    <property type="molecule type" value="Genomic_DNA"/>
</dbReference>
<dbReference type="RefSeq" id="WP_012308781.1">
    <property type="nucleotide sequence ID" value="NC_010482.1"/>
</dbReference>
<dbReference type="SMR" id="B1L7Q7"/>
<dbReference type="FunCoup" id="B1L7Q7">
    <property type="interactions" value="98"/>
</dbReference>
<dbReference type="STRING" id="374847.Kcr_0124"/>
<dbReference type="EnsemblBacteria" id="ACB06884">
    <property type="protein sequence ID" value="ACB06884"/>
    <property type="gene ID" value="Kcr_0124"/>
</dbReference>
<dbReference type="GeneID" id="6093413"/>
<dbReference type="KEGG" id="kcr:Kcr_0124"/>
<dbReference type="eggNOG" id="arCOG04111">
    <property type="taxonomic scope" value="Archaea"/>
</dbReference>
<dbReference type="HOGENOM" id="CLU_090381_5_3_2"/>
<dbReference type="InParanoid" id="B1L7Q7"/>
<dbReference type="OrthoDB" id="24205at2157"/>
<dbReference type="PhylomeDB" id="B1L7Q7"/>
<dbReference type="Proteomes" id="UP000001686">
    <property type="component" value="Chromosome"/>
</dbReference>
<dbReference type="GO" id="GO:0005737">
    <property type="term" value="C:cytoplasm"/>
    <property type="evidence" value="ECO:0007669"/>
    <property type="project" value="UniProtKB-SubCell"/>
</dbReference>
<dbReference type="GO" id="GO:0000428">
    <property type="term" value="C:DNA-directed RNA polymerase complex"/>
    <property type="evidence" value="ECO:0007669"/>
    <property type="project" value="UniProtKB-KW"/>
</dbReference>
<dbReference type="GO" id="GO:0003677">
    <property type="term" value="F:DNA binding"/>
    <property type="evidence" value="ECO:0007669"/>
    <property type="project" value="InterPro"/>
</dbReference>
<dbReference type="GO" id="GO:0003899">
    <property type="term" value="F:DNA-directed RNA polymerase activity"/>
    <property type="evidence" value="ECO:0007669"/>
    <property type="project" value="UniProtKB-UniRule"/>
</dbReference>
<dbReference type="GO" id="GO:0046983">
    <property type="term" value="F:protein dimerization activity"/>
    <property type="evidence" value="ECO:0007669"/>
    <property type="project" value="InterPro"/>
</dbReference>
<dbReference type="GO" id="GO:0006351">
    <property type="term" value="P:DNA-templated transcription"/>
    <property type="evidence" value="ECO:0007669"/>
    <property type="project" value="UniProtKB-UniRule"/>
</dbReference>
<dbReference type="CDD" id="cd06927">
    <property type="entry name" value="RNAP_L"/>
    <property type="match status" value="1"/>
</dbReference>
<dbReference type="Gene3D" id="3.30.1360.10">
    <property type="entry name" value="RNA polymerase, RBP11-like subunit"/>
    <property type="match status" value="1"/>
</dbReference>
<dbReference type="HAMAP" id="MF_00261">
    <property type="entry name" value="RNApol_arch_Rpo11"/>
    <property type="match status" value="1"/>
</dbReference>
<dbReference type="InterPro" id="IPR036603">
    <property type="entry name" value="RBP11-like"/>
</dbReference>
<dbReference type="InterPro" id="IPR009025">
    <property type="entry name" value="RBP11-like_dimer"/>
</dbReference>
<dbReference type="InterPro" id="IPR008193">
    <property type="entry name" value="RNA_pol_Rpb11_13-16kDa_CS"/>
</dbReference>
<dbReference type="InterPro" id="IPR022905">
    <property type="entry name" value="Rpo11-like"/>
</dbReference>
<dbReference type="PANTHER" id="PTHR13946">
    <property type="entry name" value="DNA-DIRECTED RNA POLYMERASE I,II,III"/>
    <property type="match status" value="1"/>
</dbReference>
<dbReference type="PANTHER" id="PTHR13946:SF28">
    <property type="entry name" value="DNA-DIRECTED RNA POLYMERASES I AND III SUBUNIT RPAC2"/>
    <property type="match status" value="1"/>
</dbReference>
<dbReference type="Pfam" id="PF13656">
    <property type="entry name" value="RNA_pol_L_2"/>
    <property type="match status" value="1"/>
</dbReference>
<dbReference type="SUPFAM" id="SSF55257">
    <property type="entry name" value="RBP11-like subunits of RNA polymerase"/>
    <property type="match status" value="1"/>
</dbReference>
<dbReference type="PROSITE" id="PS01154">
    <property type="entry name" value="RNA_POL_L_13KD"/>
    <property type="match status" value="1"/>
</dbReference>
<accession>B1L7Q7</accession>
<gene>
    <name evidence="1" type="primary">rpo11</name>
    <name evidence="1" type="synonym">rpoL</name>
    <name type="ordered locus">Kcr_0124</name>
</gene>
<evidence type="ECO:0000255" key="1">
    <source>
        <dbReference type="HAMAP-Rule" id="MF_00261"/>
    </source>
</evidence>
<protein>
    <recommendedName>
        <fullName evidence="1">DNA-directed RNA polymerase subunit Rpo11</fullName>
        <ecNumber evidence="1">2.7.7.6</ecNumber>
    </recommendedName>
    <alternativeName>
        <fullName evidence="1">DNA-directed RNA polymerase subunit L</fullName>
    </alternativeName>
</protein>
<organism>
    <name type="scientific">Korarchaeum cryptofilum (strain OPF8)</name>
    <dbReference type="NCBI Taxonomy" id="374847"/>
    <lineage>
        <taxon>Archaea</taxon>
        <taxon>Thermoproteota</taxon>
        <taxon>Candidatus Korarchaeia</taxon>
        <taxon>Candidatus Korarchaeales</taxon>
        <taxon>Candidatus Korarchaeaceae</taxon>
        <taxon>Candidatus Korarchaeum</taxon>
    </lineage>
</organism>
<sequence length="98" mass="11288">MEIEVVDVSRNEIRVLIRGETHTLLSPLVEELNSLDEVEFAGYDVPHPLKEESVLFLRVKEGMNPREVLKGAIRRLMEKYEIIGNSFIEELSSLKVNH</sequence>